<sequence>MIKLKFGVFFTVLLSSAYAHGTPQNITDLCAEYHNTQIYTLNDKIFSYTESLAGKREMAIITFKNGAIFQVEVPGSQHIDSQKKAIERMKDTLRIAYLTEAKVEKLCVWNNKTPHAIAAISMAN</sequence>
<proteinExistence type="evidence at protein level"/>
<evidence type="ECO:0000269" key="1">
    <source>
    </source>
</evidence>
<evidence type="ECO:0000269" key="2">
    <source>
    </source>
</evidence>
<evidence type="ECO:0000269" key="3">
    <source>
    </source>
</evidence>
<evidence type="ECO:0000269" key="4">
    <source>
    </source>
</evidence>
<evidence type="ECO:0000305" key="5"/>
<evidence type="ECO:0007829" key="6">
    <source>
        <dbReference type="PDB" id="5LZG"/>
    </source>
</evidence>
<evidence type="ECO:0007829" key="7">
    <source>
        <dbReference type="PDB" id="5LZJ"/>
    </source>
</evidence>
<protein>
    <recommendedName>
        <fullName>Cholera enterotoxin subunit B</fullName>
    </recommendedName>
    <alternativeName>
        <fullName>Cholera enterotoxin B chain</fullName>
    </alternativeName>
    <alternativeName>
        <fullName>Cholera enterotoxin gamma chain</fullName>
    </alternativeName>
    <alternativeName>
        <fullName>Choleragenoid</fullName>
    </alternativeName>
</protein>
<accession>P01556</accession>
<accession>Q9JQ02</accession>
<reference key="1">
    <citation type="journal article" date="1983" name="J. Biol. Chem.">
        <title>Nucleotide sequence analysis of the A2 and B subunits of Vibrio cholerae enterotoxin.</title>
        <authorList>
            <person name="Lockman H."/>
            <person name="Kaper J.B."/>
        </authorList>
    </citation>
    <scope>NUCLEOTIDE SEQUENCE [GENOMIC DNA]</scope>
</reference>
<reference key="2">
    <citation type="journal article" date="1983" name="Nature">
        <title>Cholera toxin genes: nucleotide sequence, deletion analysis and vaccine development.</title>
        <authorList>
            <person name="Mekalanos J.J."/>
            <person name="Swartz D.J."/>
            <person name="Pearson G.D.N."/>
            <person name="Harford N."/>
            <person name="Groyne F."/>
            <person name="de Wilde M."/>
        </authorList>
    </citation>
    <scope>NUCLEOTIDE SEQUENCE [GENOMIC DNA]</scope>
    <source>
        <strain>ATCC 39050 / El Tor Inaba 2125 / Serotype O1</strain>
    </source>
</reference>
<reference key="3">
    <citation type="journal article" date="1994" name="FEMS Microbiol. Lett.">
        <title>Structure and arrangement of the cholera toxin genes in Vibrio cholerae O139.</title>
        <authorList>
            <person name="Lebens M."/>
            <person name="Holmgren J."/>
        </authorList>
    </citation>
    <scope>NUCLEOTIDE SEQUENCE [GENOMIC DNA]</scope>
    <source>
        <strain>4260B / Serotype O139</strain>
    </source>
</reference>
<reference key="4">
    <citation type="submission" date="1991-05" db="EMBL/GenBank/DDBJ databases">
        <authorList>
            <person name="Dams E."/>
            <person name="de Wolf M."/>
            <person name="Dierick W."/>
        </authorList>
    </citation>
    <scope>NUCLEOTIDE SEQUENCE [GENOMIC DNA]</scope>
    <source>
        <strain>ATCC 39050 / El Tor Inaba 2125 / Serotype O1</strain>
    </source>
</reference>
<reference key="5">
    <citation type="submission" date="1994-05" db="EMBL/GenBank/DDBJ databases">
        <authorList>
            <person name="Yamamoto K."/>
            <person name="Do V.G.R.F."/>
            <person name="Xu M."/>
            <person name="Iida T."/>
            <person name="Miwatani T."/>
            <person name="Albert M.J."/>
            <person name="Honda T."/>
        </authorList>
    </citation>
    <scope>NUCLEOTIDE SEQUENCE [GENOMIC DNA]</scope>
    <source>
        <strain>1854 / O139-Bengal</strain>
    </source>
</reference>
<reference key="6">
    <citation type="journal article" date="2000" name="Nature">
        <title>DNA sequence of both chromosomes of the cholera pathogen Vibrio cholerae.</title>
        <authorList>
            <person name="Heidelberg J.F."/>
            <person name="Eisen J.A."/>
            <person name="Nelson W.C."/>
            <person name="Clayton R.A."/>
            <person name="Gwinn M.L."/>
            <person name="Dodson R.J."/>
            <person name="Haft D.H."/>
            <person name="Hickey E.K."/>
            <person name="Peterson J.D."/>
            <person name="Umayam L.A."/>
            <person name="Gill S.R."/>
            <person name="Nelson K.E."/>
            <person name="Read T.D."/>
            <person name="Tettelin H."/>
            <person name="Richardson D.L."/>
            <person name="Ermolaeva M.D."/>
            <person name="Vamathevan J.J."/>
            <person name="Bass S."/>
            <person name="Qin H."/>
            <person name="Dragoi I."/>
            <person name="Sellers P."/>
            <person name="McDonald L.A."/>
            <person name="Utterback T.R."/>
            <person name="Fleischmann R.D."/>
            <person name="Nierman W.C."/>
            <person name="White O."/>
            <person name="Salzberg S.L."/>
            <person name="Smith H.O."/>
            <person name="Colwell R.R."/>
            <person name="Mekalanos J.J."/>
            <person name="Venter J.C."/>
            <person name="Fraser C.M."/>
        </authorList>
    </citation>
    <scope>NUCLEOTIDE SEQUENCE [LARGE SCALE GENOMIC DNA]</scope>
    <source>
        <strain>ATCC 39315 / El Tor Inaba N16961</strain>
    </source>
</reference>
<reference key="7">
    <citation type="journal article" date="1977" name="J. Biol. Chem.">
        <title>Covalent structure of the beta chain of cholera enterotoxin.</title>
        <authorList>
            <person name="Kurosky A."/>
            <person name="Markel D.E."/>
            <person name="Peterson J.W."/>
        </authorList>
    </citation>
    <scope>PROTEIN SEQUENCE OF 22-124</scope>
</reference>
<reference key="8">
    <citation type="journal article" date="1977" name="J. Biol. Chem.">
        <title>Determination of the primary structure of cholera toxin B subunit.</title>
        <authorList>
            <person name="Lai C.-Y."/>
        </authorList>
    </citation>
    <scope>PROTEIN SEQUENCE OF 22-124</scope>
</reference>
<reference key="9">
    <citation type="journal article" date="1976" name="Biochemistry">
        <title>The arrangement of subunits in cholera toxin.</title>
        <authorList>
            <person name="Gill D.M."/>
        </authorList>
    </citation>
    <scope>SUBUNIT</scope>
</reference>
<reference key="10">
    <citation type="journal article" date="2003" name="Mol. Biol. Cell">
        <title>Gangliosides that associate with lipid rafts mediate transport of cholera and related toxins from the plasma membrane to endoplasmic reticulum.</title>
        <authorList>
            <person name="Fujinaga Y."/>
            <person name="Wolf A.A."/>
            <person name="Rodighiero C."/>
            <person name="Wheeler H."/>
            <person name="Tsai B."/>
            <person name="Allen L."/>
            <person name="Jobling M.G."/>
            <person name="Rapoport T."/>
            <person name="Holmes R.K."/>
            <person name="Lencer W.I."/>
        </authorList>
    </citation>
    <scope>TRANSPORT OF CHOLERA TOXIN WITHIN THE INTESTINAL CELL</scope>
</reference>
<reference key="11">
    <citation type="journal article" date="1994" name="Protein Sci.">
        <title>Crystal structure of cholera toxin B-pentamer bound to receptor GM1 pentasaccharide.</title>
        <authorList>
            <person name="Merritt E.A."/>
            <person name="Sarfaty S."/>
            <person name="van den Akker F."/>
            <person name="L'Hoir C."/>
            <person name="Martial J.A."/>
            <person name="Hol W.G.J."/>
        </authorList>
    </citation>
    <scope>X-RAY CRYSTALLOGRAPHY (2.2 ANGSTROMS)</scope>
</reference>
<reference key="12">
    <citation type="journal article" date="1995" name="J. Mol. Biol.">
        <title>The 2.4 A crystal structure of cholera toxin B subunit pentamer: choleragenoid.</title>
        <authorList>
            <person name="Zhang R.-G."/>
            <person name="Westbrook M.L."/>
            <person name="Westbrook E.M."/>
            <person name="Scott D.L."/>
            <person name="Otwinowski Z."/>
            <person name="Maulik P.R."/>
            <person name="Reed R.A."/>
            <person name="Shipley G.G."/>
        </authorList>
    </citation>
    <scope>X-RAY CRYSTALLOGRAPHY (2.4 ANGSTROMS)</scope>
</reference>
<reference key="13">
    <citation type="journal article" date="1997" name="Protein Sci.">
        <title>Structural studies of receptor binding by cholera toxin mutants.</title>
        <authorList>
            <person name="Merritt E.A."/>
            <person name="Sarfaty S."/>
            <person name="Jobling M.G."/>
            <person name="Chang T."/>
            <person name="Holmes R.K."/>
            <person name="Hirst T.R."/>
            <person name="Hol W.G.J."/>
        </authorList>
    </citation>
    <scope>X-RAY CRYSTALLOGRAPHY (1.25 ANGSTROMS)</scope>
    <source>
        <strain>Ogawa 41 / Classical biotype</strain>
    </source>
</reference>
<reference key="14">
    <citation type="journal article" date="2001" name="Proc. Natl. Acad. Sci. U.S.A.">
        <title>A mutant cholera toxin B subunit that binds GM1-ganglioside but lacks immunomodulatory or toxic activity.</title>
        <authorList>
            <person name="Aman A.T."/>
            <person name="Fraser S."/>
            <person name="Merritt E.A."/>
            <person name="Rodigherio C."/>
            <person name="Kenny M."/>
            <person name="Ahn M."/>
            <person name="Hol W.G.J."/>
            <person name="Williams N.A."/>
            <person name="Lencer W.I."/>
            <person name="Hirst T.R."/>
        </authorList>
    </citation>
    <scope>X-RAY CRYSTALLOGRAPHY (2.0 ANGSTROMS) OF MUTANT ALA-57</scope>
</reference>
<reference key="15">
    <citation type="journal article" date="2002" name="Chem. Biol.">
        <title>Anchor-based design of improved cholera toxin and E. coli heat-labile enterotoxin receptor binding antagonists that display multiple binding modes.</title>
        <authorList>
            <person name="Pickens J.C."/>
            <person name="Merritt E.A."/>
            <person name="Ahn M."/>
            <person name="Verlinde C.L.M.J."/>
            <person name="Hol W.G.J."/>
            <person name="Fan E."/>
        </authorList>
    </citation>
    <scope>X-RAY CRYSTALLOGRAPHY (1.3 ANGSTROMS) IN COMPLEX WITH INHIBITOR</scope>
</reference>
<reference key="16">
    <citation type="journal article" date="2002" name="J. Am. Chem. Soc.">
        <title>Solution and crystallographic studies of branched multivalent ligands that inhibit the receptor-binding of cholera toxin.</title>
        <authorList>
            <person name="Zhang Z."/>
            <person name="Merritt E.A."/>
            <person name="Ahn M."/>
            <person name="Roach C."/>
            <person name="Hou Z."/>
            <person name="Verlinde C.L.M.J."/>
            <person name="Hol W.G.J."/>
            <person name="Fan E."/>
        </authorList>
    </citation>
    <scope>X-RAY CRYSTALLOGRAPHY (1.45 ANGSTROMS)</scope>
</reference>
<dbReference type="EMBL" id="K01170">
    <property type="protein sequence ID" value="AAA27573.1"/>
    <property type="molecule type" value="Genomic_DNA"/>
</dbReference>
<dbReference type="EMBL" id="X00171">
    <property type="protein sequence ID" value="CAA24996.1"/>
    <property type="molecule type" value="Genomic_DNA"/>
</dbReference>
<dbReference type="EMBL" id="X76390">
    <property type="protein sequence ID" value="CAA53973.1"/>
    <property type="molecule type" value="Genomic_DNA"/>
</dbReference>
<dbReference type="EMBL" id="X76391">
    <property type="protein sequence ID" value="CAA53976.1"/>
    <property type="molecule type" value="Genomic_DNA"/>
</dbReference>
<dbReference type="EMBL" id="X58786">
    <property type="protein sequence ID" value="CAA41593.1"/>
    <property type="molecule type" value="Genomic_DNA"/>
</dbReference>
<dbReference type="EMBL" id="D30053">
    <property type="protein sequence ID" value="BAA06291.1"/>
    <property type="molecule type" value="Genomic_DNA"/>
</dbReference>
<dbReference type="EMBL" id="AE003852">
    <property type="protein sequence ID" value="AAF94613.1"/>
    <property type="molecule type" value="Genomic_DNA"/>
</dbReference>
<dbReference type="PIR" id="S14624">
    <property type="entry name" value="XVVCB"/>
</dbReference>
<dbReference type="RefSeq" id="NP_231099.1">
    <property type="nucleotide sequence ID" value="NC_002505.1"/>
</dbReference>
<dbReference type="RefSeq" id="WP_000593522.1">
    <property type="nucleotide sequence ID" value="NZ_LT906614.1"/>
</dbReference>
<dbReference type="PDB" id="1CHP">
    <property type="method" value="X-ray"/>
    <property type="resolution" value="2.00 A"/>
    <property type="chains" value="D/E/F/G/H=22-124"/>
</dbReference>
<dbReference type="PDB" id="1CHQ">
    <property type="method" value="X-ray"/>
    <property type="resolution" value="2.10 A"/>
    <property type="chains" value="D/E/F/G/H=22-124"/>
</dbReference>
<dbReference type="PDB" id="1CT1">
    <property type="method" value="X-ray"/>
    <property type="resolution" value="2.30 A"/>
    <property type="chains" value="D/E/F/G/H=22-124"/>
</dbReference>
<dbReference type="PDB" id="1FGB">
    <property type="method" value="X-ray"/>
    <property type="resolution" value="2.40 A"/>
    <property type="chains" value="D/E/F/G/H=22-124"/>
</dbReference>
<dbReference type="PDB" id="1G8Z">
    <property type="method" value="X-ray"/>
    <property type="resolution" value="2.00 A"/>
    <property type="chains" value="D/E/F/G/H=22-124"/>
</dbReference>
<dbReference type="PDB" id="1JR0">
    <property type="method" value="X-ray"/>
    <property type="resolution" value="1.30 A"/>
    <property type="chains" value="D/E/F/G/H=22-124"/>
</dbReference>
<dbReference type="PDB" id="1MD2">
    <property type="method" value="X-ray"/>
    <property type="resolution" value="1.45 A"/>
    <property type="chains" value="D/E/F/G/H=22-124"/>
</dbReference>
<dbReference type="PDB" id="1RCV">
    <property type="method" value="X-ray"/>
    <property type="resolution" value="1.60 A"/>
    <property type="chains" value="D/E/F/G/H=22-124"/>
</dbReference>
<dbReference type="PDB" id="1RD9">
    <property type="method" value="X-ray"/>
    <property type="resolution" value="1.44 A"/>
    <property type="chains" value="D/E/F/G/H=22-124"/>
</dbReference>
<dbReference type="PDB" id="1RDP">
    <property type="method" value="X-ray"/>
    <property type="resolution" value="1.35 A"/>
    <property type="chains" value="D/E/F/G/H=22-124"/>
</dbReference>
<dbReference type="PDB" id="1RF2">
    <property type="method" value="X-ray"/>
    <property type="resolution" value="1.35 A"/>
    <property type="chains" value="D/E/F/G/H=22-124"/>
</dbReference>
<dbReference type="PDB" id="1S5B">
    <property type="method" value="X-ray"/>
    <property type="resolution" value="2.13 A"/>
    <property type="chains" value="D/E/F/G/H=22-124"/>
</dbReference>
<dbReference type="PDB" id="1S5C">
    <property type="method" value="X-ray"/>
    <property type="resolution" value="2.50 A"/>
    <property type="chains" value="D/E/F/G/H=22-124"/>
</dbReference>
<dbReference type="PDB" id="1S5D">
    <property type="method" value="X-ray"/>
    <property type="resolution" value="1.75 A"/>
    <property type="chains" value="D/E/F/G/H=22-124"/>
</dbReference>
<dbReference type="PDB" id="1S5E">
    <property type="method" value="X-ray"/>
    <property type="resolution" value="1.90 A"/>
    <property type="chains" value="D/E/F/G/H/J/K/L/M/N=22-124"/>
</dbReference>
<dbReference type="PDB" id="1S5F">
    <property type="method" value="X-ray"/>
    <property type="resolution" value="2.60 A"/>
    <property type="chains" value="D/E/F/G/H=22-124"/>
</dbReference>
<dbReference type="PDB" id="1XTC">
    <property type="method" value="X-ray"/>
    <property type="resolution" value="2.40 A"/>
    <property type="chains" value="D/E/F/G/H=22-124"/>
</dbReference>
<dbReference type="PDB" id="2CHB">
    <property type="method" value="X-ray"/>
    <property type="resolution" value="2.00 A"/>
    <property type="chains" value="D/E/F/G/H=22-124"/>
</dbReference>
<dbReference type="PDB" id="3CHB">
    <property type="method" value="X-ray"/>
    <property type="resolution" value="1.25 A"/>
    <property type="chains" value="D/E/F/G/H=22-124"/>
</dbReference>
<dbReference type="PDB" id="3EFX">
    <property type="method" value="X-ray"/>
    <property type="resolution" value="1.94 A"/>
    <property type="chains" value="D/E/F/G/H/I/J/K/L/M=23-124"/>
</dbReference>
<dbReference type="PDB" id="5ELC">
    <property type="method" value="X-ray"/>
    <property type="resolution" value="1.50 A"/>
    <property type="chains" value="A/B/C/D/E/F/G/H/I/J=22-124"/>
</dbReference>
<dbReference type="PDB" id="5ELE">
    <property type="method" value="X-ray"/>
    <property type="resolution" value="1.60 A"/>
    <property type="chains" value="A/B/C/D/E/F/G/H/I/J=22-124"/>
</dbReference>
<dbReference type="PDB" id="5ELF">
    <property type="method" value="X-ray"/>
    <property type="resolution" value="1.55 A"/>
    <property type="chains" value="A/B/C/D/E/F/G/H/I/J=22-124"/>
</dbReference>
<dbReference type="PDB" id="5LZG">
    <property type="method" value="X-ray"/>
    <property type="resolution" value="1.13 A"/>
    <property type="chains" value="A/B/C/D/E=22-124"/>
</dbReference>
<dbReference type="PDB" id="5LZJ">
    <property type="method" value="X-ray"/>
    <property type="resolution" value="1.20 A"/>
    <property type="chains" value="A/B/C/D/E=22-124"/>
</dbReference>
<dbReference type="PDB" id="6HJD">
    <property type="method" value="X-ray"/>
    <property type="resolution" value="1.54 A"/>
    <property type="chains" value="A/B/C/D/E/F/G/H/I/J=22-124"/>
</dbReference>
<dbReference type="PDB" id="6HMW">
    <property type="method" value="X-ray"/>
    <property type="resolution" value="1.95 A"/>
    <property type="chains" value="A/B/C/D/E/F/G/H/I/J=22-124"/>
</dbReference>
<dbReference type="PDB" id="6HMY">
    <property type="method" value="X-ray"/>
    <property type="resolution" value="1.60 A"/>
    <property type="chains" value="A/B/C/D/E/F/G/H/I/J=22-124"/>
</dbReference>
<dbReference type="PDB" id="6HSV">
    <property type="method" value="X-ray"/>
    <property type="resolution" value="2.45 A"/>
    <property type="chains" value="A/B/C/D/E/F/G/H/I/J/K/L/M/N/O/P/Q/R/S/T=22-124"/>
</dbReference>
<dbReference type="PDB" id="7LVB">
    <property type="method" value="X-ray"/>
    <property type="resolution" value="2.25 A"/>
    <property type="chains" value="A/B/C/D/E/F/G/H/I/J=22-124"/>
</dbReference>
<dbReference type="PDB" id="8OXS">
    <property type="method" value="X-ray"/>
    <property type="resolution" value="1.60 A"/>
    <property type="chains" value="C/D/E/F/G/H/I/J/K/L=22-124"/>
</dbReference>
<dbReference type="PDB" id="8Q6I">
    <property type="method" value="X-ray"/>
    <property type="resolution" value="1.60 A"/>
    <property type="chains" value="D/E/F/G/H=22-124"/>
</dbReference>
<dbReference type="PDB" id="8QRE">
    <property type="method" value="X-ray"/>
    <property type="resolution" value="2.30 A"/>
    <property type="chains" value="C/D/E/F/G/H/I/J/K/L=22-124"/>
</dbReference>
<dbReference type="PDB" id="9EWF">
    <property type="method" value="X-ray"/>
    <property type="resolution" value="2.10 A"/>
    <property type="chains" value="A/B/C/D/E/F/G/H/I/J=22-124"/>
</dbReference>
<dbReference type="PDBsum" id="1CHP"/>
<dbReference type="PDBsum" id="1CHQ"/>
<dbReference type="PDBsum" id="1CT1"/>
<dbReference type="PDBsum" id="1FGB"/>
<dbReference type="PDBsum" id="1G8Z"/>
<dbReference type="PDBsum" id="1JR0"/>
<dbReference type="PDBsum" id="1MD2"/>
<dbReference type="PDBsum" id="1RCV"/>
<dbReference type="PDBsum" id="1RD9"/>
<dbReference type="PDBsum" id="1RDP"/>
<dbReference type="PDBsum" id="1RF2"/>
<dbReference type="PDBsum" id="1S5B"/>
<dbReference type="PDBsum" id="1S5C"/>
<dbReference type="PDBsum" id="1S5D"/>
<dbReference type="PDBsum" id="1S5E"/>
<dbReference type="PDBsum" id="1S5F"/>
<dbReference type="PDBsum" id="1XTC"/>
<dbReference type="PDBsum" id="2CHB"/>
<dbReference type="PDBsum" id="3CHB"/>
<dbReference type="PDBsum" id="3EFX"/>
<dbReference type="PDBsum" id="5ELC"/>
<dbReference type="PDBsum" id="5ELE"/>
<dbReference type="PDBsum" id="5ELF"/>
<dbReference type="PDBsum" id="5LZG"/>
<dbReference type="PDBsum" id="5LZJ"/>
<dbReference type="PDBsum" id="6HJD"/>
<dbReference type="PDBsum" id="6HMW"/>
<dbReference type="PDBsum" id="6HMY"/>
<dbReference type="PDBsum" id="6HSV"/>
<dbReference type="PDBsum" id="7LVB"/>
<dbReference type="PDBsum" id="8OXS"/>
<dbReference type="PDBsum" id="8Q6I"/>
<dbReference type="PDBsum" id="8QRE"/>
<dbReference type="PDBsum" id="9EWF"/>
<dbReference type="SMR" id="P01556"/>
<dbReference type="ComplexPortal" id="CPX-2345">
    <property type="entry name" value="Cholera toxin"/>
</dbReference>
<dbReference type="DIP" id="DIP-6256N"/>
<dbReference type="IntAct" id="P01556">
    <property type="interactions" value="5"/>
</dbReference>
<dbReference type="MINT" id="P01556"/>
<dbReference type="STRING" id="243277.VC_1456"/>
<dbReference type="DrugBank" id="DB02572">
    <property type="generic name" value="1,3-bis-([3-[3-[3-(4-{3-[3-nitro-5-(galactopyranosyloxy)-benzoylamino]-propyl}-piperazin-1-yl)-propylamino-3,4-dioxo-cyclobutenyl]-amino-propoxy-ethoxy-ethoxy]-propyl-]amino-carbonyloxy)-2-amino-propane"/>
</dbReference>
<dbReference type="DrugBank" id="DB02903">
    <property type="generic name" value="1,3-bis-([[3-(4-{3-[3-nitro-5-(galactopyranosyloxy)-benzoylamino]-propyl}-piperazin-1-yl)-propylamino-3,4-dioxo-cyclobutenyl]-amino-ethyl]-amino-carbonyloxy)-2-amino-propane"/>
</dbReference>
<dbReference type="DrugBank" id="DB02802">
    <property type="generic name" value="3-(alpha-D-Galactopyranosyloxy)-5-nitrobenzamide"/>
</dbReference>
<dbReference type="DrugBank" id="DB04210">
    <property type="generic name" value="3-(alpha-D-galactopyranosyloxy)-N-(3-{4-[3-({2-[(3-{4-[3-({[3-(hexopyranosyloxy)-5-nitrophenyl]carbonyl}amino)propyl]piperazin-1-yl}propyl)amino]-3,4-dioxocyclobut-1-en-1-yl}amino)propyl]piperazin-1-yl}propyl)-5-nitrobenzamide"/>
</dbReference>
<dbReference type="DrugBank" id="DB03077">
    <property type="generic name" value="3-Amino-4-{3-[2-(2-Propoxy-Ethoxy)-Ethoxy]-Propylamino}-Cyclobut-3-Ene-1,2-Dione"/>
</dbReference>
<dbReference type="DrugBank" id="DB02379">
    <property type="generic name" value="Beta-D-Glucose"/>
</dbReference>
<dbReference type="DrugBank" id="DB02474">
    <property type="generic name" value="BMSC-0013"/>
</dbReference>
<dbReference type="DrugBank" id="DB02574">
    <property type="generic name" value="BV2"/>
</dbReference>
<dbReference type="DrugBank" id="DB02213">
    <property type="generic name" value="Metanitrophenyl-Alpha-D-Galactoside"/>
</dbReference>
<dbReference type="DrugBank" id="DB03524">
    <property type="generic name" value="N-[3-[4-(3-aminopropyl)piperazin-1-yl]propyl]-3-[(2-thiophen-2-ylacetyl)amino]-5-[(2R,3R,4S,5R,6R)-3,4,5-trihydroxy-6-(hydroxymethyl)oxan-2-yl]oxybenzamide"/>
</dbReference>
<dbReference type="DrugBank" id="DB03721">
    <property type="generic name" value="N-acetyl-alpha-neuraminic acid"/>
</dbReference>
<dbReference type="DrugBank" id="DB04073">
    <property type="generic name" value="N-{3-[4-(3-amino-propyl)-piperazin-1-yl]-propyl}-3-nitro-5-(galactopyranosyl)-beta-benzamide"/>
</dbReference>
<dbReference type="DrugBank" id="DB03235">
    <property type="generic name" value="N-{3-[4-(3-aminopropyl)piperazin-1-yl]propyl}-3-(alpha-D-galactopyranosyloxy)-5-nitrobenzamide"/>
</dbReference>
<dbReference type="UniLectin" id="P01556"/>
<dbReference type="ABCD" id="P01556">
    <property type="antibodies" value="1 sequenced antibody"/>
</dbReference>
<dbReference type="DNASU" id="2613962"/>
<dbReference type="EnsemblBacteria" id="AAF94613">
    <property type="protein sequence ID" value="AAF94613"/>
    <property type="gene ID" value="VC_1456"/>
</dbReference>
<dbReference type="KEGG" id="vch:VC_1456"/>
<dbReference type="PATRIC" id="fig|243277.26.peg.1386"/>
<dbReference type="HOGENOM" id="CLU_2002942_0_0_6"/>
<dbReference type="BioCyc" id="MetaCyc:FY484_RS07325-MONOMER"/>
<dbReference type="EvolutionaryTrace" id="P01556"/>
<dbReference type="PHI-base" id="PHI:699"/>
<dbReference type="PRO" id="PR:P01556"/>
<dbReference type="Proteomes" id="UP000000584">
    <property type="component" value="Chromosome 1"/>
</dbReference>
<dbReference type="GO" id="GO:1902494">
    <property type="term" value="C:catalytic complex"/>
    <property type="evidence" value="ECO:0000315"/>
    <property type="project" value="CAFA"/>
</dbReference>
<dbReference type="GO" id="GO:0005576">
    <property type="term" value="C:extracellular region"/>
    <property type="evidence" value="ECO:0007669"/>
    <property type="project" value="UniProtKB-SubCell"/>
</dbReference>
<dbReference type="GO" id="GO:0020002">
    <property type="term" value="C:host cell plasma membrane"/>
    <property type="evidence" value="ECO:0007669"/>
    <property type="project" value="UniProtKB-SubCell"/>
</dbReference>
<dbReference type="GO" id="GO:0016020">
    <property type="term" value="C:membrane"/>
    <property type="evidence" value="ECO:0007669"/>
    <property type="project" value="UniProtKB-KW"/>
</dbReference>
<dbReference type="GO" id="GO:0042597">
    <property type="term" value="C:periplasmic space"/>
    <property type="evidence" value="ECO:0000315"/>
    <property type="project" value="CAFA"/>
</dbReference>
<dbReference type="GO" id="GO:0005534">
    <property type="term" value="F:galactose binding"/>
    <property type="evidence" value="ECO:0000315"/>
    <property type="project" value="CAFA"/>
</dbReference>
<dbReference type="GO" id="GO:0046812">
    <property type="term" value="F:host cell surface binding"/>
    <property type="evidence" value="ECO:0000314"/>
    <property type="project" value="TIGR"/>
</dbReference>
<dbReference type="GO" id="GO:0090729">
    <property type="term" value="F:toxin activity"/>
    <property type="evidence" value="ECO:0007669"/>
    <property type="project" value="UniProtKB-KW"/>
</dbReference>
<dbReference type="GO" id="GO:0042531">
    <property type="term" value="P:positive regulation of tyrosine phosphorylation of STAT protein"/>
    <property type="evidence" value="ECO:0000314"/>
    <property type="project" value="CACAO"/>
</dbReference>
<dbReference type="FunFam" id="2.40.50.110:FF:000001">
    <property type="entry name" value="Cholera enterotoxin subunit B"/>
    <property type="match status" value="1"/>
</dbReference>
<dbReference type="Gene3D" id="2.40.50.110">
    <property type="match status" value="1"/>
</dbReference>
<dbReference type="InterPro" id="IPR008992">
    <property type="entry name" value="Enterotoxin"/>
</dbReference>
<dbReference type="InterPro" id="IPR001835">
    <property type="entry name" value="Enterotoxin_B"/>
</dbReference>
<dbReference type="Pfam" id="PF01376">
    <property type="entry name" value="Enterotoxin_b"/>
    <property type="match status" value="1"/>
</dbReference>
<dbReference type="PRINTS" id="PR00772">
    <property type="entry name" value="ENTEROTOXINB"/>
</dbReference>
<dbReference type="SUPFAM" id="SSF50203">
    <property type="entry name" value="Bacterial enterotoxins"/>
    <property type="match status" value="1"/>
</dbReference>
<comment type="function">
    <text>The B subunit pentameric ring directs the A subunit to its target by binding to the GM1 gangliosides present on the surface of the intestinal epithelial cells. It can bind five GM1 gangliosides. It has no toxic activity by itself.</text>
</comment>
<comment type="subunit">
    <text evidence="1 2">The holotoxin (choleragen) consists of a pentameric ring of B subunits whose central pore is occupied by the A subunit. The A subunit contains two chains, A1 and A2, linked by a disulfide bridge.</text>
</comment>
<comment type="interaction">
    <interactant intactId="EBI-1038383">
        <id>P01556</id>
    </interactant>
    <interactant intactId="EBI-1038392">
        <id>P01555</id>
        <label>ctxA</label>
    </interactant>
    <organismsDiffer>false</organismsDiffer>
    <experiments>5</experiments>
</comment>
<comment type="subcellular location">
    <subcellularLocation>
        <location>Secreted</location>
    </subcellularLocation>
    <subcellularLocation>
        <location evidence="5">Host cell membrane</location>
    </subcellularLocation>
</comment>
<name>CHTB_VIBCH</name>
<keyword id="KW-0002">3D-structure</keyword>
<keyword id="KW-0903">Direct protein sequencing</keyword>
<keyword id="KW-1015">Disulfide bond</keyword>
<keyword id="KW-0260">Enterotoxin</keyword>
<keyword id="KW-1032">Host cell membrane</keyword>
<keyword id="KW-1043">Host membrane</keyword>
<keyword id="KW-0472">Membrane</keyword>
<keyword id="KW-1185">Reference proteome</keyword>
<keyword id="KW-0964">Secreted</keyword>
<keyword id="KW-0732">Signal</keyword>
<keyword id="KW-0800">Toxin</keyword>
<keyword id="KW-0843">Virulence</keyword>
<gene>
    <name type="primary">ctxB</name>
    <name type="synonym">toxB</name>
    <name type="ordered locus">VC_1456</name>
</gene>
<organism>
    <name type="scientific">Vibrio cholerae serotype O1 (strain ATCC 39315 / El Tor Inaba N16961)</name>
    <dbReference type="NCBI Taxonomy" id="243277"/>
    <lineage>
        <taxon>Bacteria</taxon>
        <taxon>Pseudomonadati</taxon>
        <taxon>Pseudomonadota</taxon>
        <taxon>Gammaproteobacteria</taxon>
        <taxon>Vibrionales</taxon>
        <taxon>Vibrionaceae</taxon>
        <taxon>Vibrio</taxon>
    </lineage>
</organism>
<feature type="signal peptide" evidence="3 4">
    <location>
        <begin position="1"/>
        <end position="21"/>
    </location>
</feature>
<feature type="chain" id="PRO_0000019344" description="Cholera enterotoxin subunit B">
    <location>
        <begin position="22"/>
        <end position="124"/>
    </location>
</feature>
<feature type="disulfide bond" evidence="4">
    <location>
        <begin position="30"/>
        <end position="107"/>
    </location>
</feature>
<feature type="mutagenesis site" description="Loss of toxicity.">
    <original>H</original>
    <variation>A</variation>
    <location>
        <position position="78"/>
    </location>
</feature>
<feature type="sequence conflict" description="In Ref. 2; CAA24996." evidence="5" ref="2">
    <original>Y</original>
    <variation>S</variation>
    <location>
        <position position="33"/>
    </location>
</feature>
<feature type="sequence conflict" description="In Ref. 7; AA sequence and 8; AA sequence." evidence="5" ref="7 8">
    <original>Y</original>
    <variation>H</variation>
    <location>
        <position position="39"/>
    </location>
</feature>
<feature type="sequence conflict" description="In Ref. 7; AA sequence and 8; AA sequence." evidence="5" ref="7 8">
    <original>D</original>
    <variation>N</variation>
    <location>
        <position position="43"/>
    </location>
</feature>
<feature type="sequence conflict" description="In Ref. 7; AA sequence and 8; AA sequence." evidence="5" ref="7 8">
    <original>I</original>
    <variation>T</variation>
    <location>
        <position position="68"/>
    </location>
</feature>
<feature type="sequence conflict" description="In Ref. 8; AA sequence." evidence="5" ref="8">
    <original>Q</original>
    <variation>E</variation>
    <location>
        <position position="70"/>
    </location>
</feature>
<feature type="sequence conflict" description="In Ref. 2; CAA24996." evidence="5" ref="2">
    <original>G</original>
    <variation>S</variation>
    <location>
        <position position="75"/>
    </location>
</feature>
<feature type="sequence conflict" description="In Ref. 7; AA sequence and 8; AA sequence." evidence="5" ref="7 8">
    <original>D</original>
    <variation>N</variation>
    <location>
        <position position="91"/>
    </location>
</feature>
<feature type="helix" evidence="6">
    <location>
        <begin position="26"/>
        <end position="30"/>
    </location>
</feature>
<feature type="strand" evidence="6">
    <location>
        <begin position="36"/>
        <end position="43"/>
    </location>
</feature>
<feature type="strand" evidence="6">
    <location>
        <begin position="46"/>
        <end position="51"/>
    </location>
</feature>
<feature type="strand" evidence="6">
    <location>
        <begin position="58"/>
        <end position="62"/>
    </location>
</feature>
<feature type="strand" evidence="6">
    <location>
        <begin position="68"/>
        <end position="71"/>
    </location>
</feature>
<feature type="turn" evidence="7">
    <location>
        <begin position="75"/>
        <end position="77"/>
    </location>
</feature>
<feature type="helix" evidence="6">
    <location>
        <begin position="82"/>
        <end position="99"/>
    </location>
</feature>
<feature type="strand" evidence="6">
    <location>
        <begin position="103"/>
        <end position="123"/>
    </location>
</feature>